<evidence type="ECO:0007829" key="1">
    <source>
        <dbReference type="PDB" id="3II2"/>
    </source>
</evidence>
<dbReference type="EMBL" id="AJ567472">
    <property type="protein sequence ID" value="CAD98934.1"/>
    <property type="molecule type" value="Genomic_DNA"/>
</dbReference>
<dbReference type="RefSeq" id="YP_003730.1">
    <property type="nucleotide sequence ID" value="NC_005830.1"/>
</dbReference>
<dbReference type="PDB" id="3II2">
    <property type="method" value="X-ray"/>
    <property type="resolution" value="2.00 A"/>
    <property type="chains" value="A=2-157"/>
</dbReference>
<dbReference type="PDB" id="3II3">
    <property type="method" value="X-ray"/>
    <property type="resolution" value="2.70 A"/>
    <property type="chains" value="A=2-157"/>
</dbReference>
<dbReference type="PDB" id="3ILD">
    <property type="method" value="X-ray"/>
    <property type="resolution" value="3.10 A"/>
    <property type="chains" value="A=2-157"/>
</dbReference>
<dbReference type="PDB" id="3ILE">
    <property type="method" value="X-ray"/>
    <property type="resolution" value="3.30 A"/>
    <property type="chains" value="A=2-157"/>
</dbReference>
<dbReference type="PDBsum" id="3II2"/>
<dbReference type="PDBsum" id="3II3"/>
<dbReference type="PDBsum" id="3ILD"/>
<dbReference type="PDBsum" id="3ILE"/>
<dbReference type="SMR" id="Q70LE6"/>
<dbReference type="KEGG" id="vg:2769190"/>
<dbReference type="EvolutionaryTrace" id="Q70LE6"/>
<dbReference type="Proteomes" id="UP000000514">
    <property type="component" value="Genome"/>
</dbReference>
<dbReference type="Gene3D" id="2.60.40.2930">
    <property type="match status" value="1"/>
</dbReference>
<dbReference type="InterPro" id="IPR021672">
    <property type="entry name" value="DUF3258"/>
</dbReference>
<dbReference type="Pfam" id="PF11646">
    <property type="entry name" value="DUF3258"/>
    <property type="match status" value="1"/>
</dbReference>
<organismHost>
    <name type="scientific">Acidianus hospitalis</name>
    <dbReference type="NCBI Taxonomy" id="563177"/>
</organismHost>
<organismHost>
    <name type="scientific">Acidianus infernus</name>
    <dbReference type="NCBI Taxonomy" id="12915"/>
</organismHost>
<sequence length="157" mass="18907">MSEMSVVEYEVVSKNLTSKMSHELLFSVKKRWFVKPFRHDRQLGKLHYKLLPGNYIKFGLYVLKNQDYARFEIAWVHVDKDGKIEERTVYSIETYWHIFIDIENDLNCPYVLAKFIEMRPEFHKTAWVEESNYSIAEDDIQMVESIKRYLERKIASD</sequence>
<keyword id="KW-0002">3D-structure</keyword>
<keyword id="KW-1185">Reference proteome</keyword>
<reference key="1">
    <citation type="journal article" date="2003" name="Virology">
        <title>AFV1, a novel virus infecting hyperthermophilic archaea of the genus acidianus.</title>
        <authorList>
            <person name="Bettstetter M."/>
            <person name="Peng X."/>
            <person name="Garrett R.A."/>
            <person name="Prangishvili D."/>
        </authorList>
    </citation>
    <scope>NUCLEOTIDE SEQUENCE [GENOMIC DNA]</scope>
</reference>
<reference key="2">
    <citation type="journal article" date="2009" name="Protein Sci.">
        <title>The thermo- and acido-stable ORF-99 from the archaeal virus AFV1.</title>
        <authorList>
            <person name="Goulet A."/>
            <person name="Spinelli S."/>
            <person name="Blangy S."/>
            <person name="van Tilbeurgh H."/>
            <person name="Leulliot N."/>
            <person name="Basta T."/>
            <person name="Prangishvili D."/>
            <person name="Cambillau C."/>
            <person name="Campanacci V."/>
        </authorList>
    </citation>
    <scope>X-RAY CRYSTALLOGRAPHY (1.80 ANGSTROMS) OF 1-157</scope>
</reference>
<proteinExistence type="evidence at protein level"/>
<feature type="chain" id="PRO_0000384562" description="Uncharacterized protein ORF157">
    <location>
        <begin position="1"/>
        <end position="157"/>
    </location>
</feature>
<feature type="strand" evidence="1">
    <location>
        <begin position="7"/>
        <end position="15"/>
    </location>
</feature>
<feature type="strand" evidence="1">
    <location>
        <begin position="17"/>
        <end position="27"/>
    </location>
</feature>
<feature type="turn" evidence="1">
    <location>
        <begin position="28"/>
        <end position="31"/>
    </location>
</feature>
<feature type="strand" evidence="1">
    <location>
        <begin position="37"/>
        <end position="40"/>
    </location>
</feature>
<feature type="turn" evidence="1">
    <location>
        <begin position="41"/>
        <end position="44"/>
    </location>
</feature>
<feature type="strand" evidence="1">
    <location>
        <begin position="45"/>
        <end position="50"/>
    </location>
</feature>
<feature type="strand" evidence="1">
    <location>
        <begin position="52"/>
        <end position="63"/>
    </location>
</feature>
<feature type="turn" evidence="1">
    <location>
        <begin position="64"/>
        <end position="67"/>
    </location>
</feature>
<feature type="strand" evidence="1">
    <location>
        <begin position="68"/>
        <end position="78"/>
    </location>
</feature>
<feature type="strand" evidence="1">
    <location>
        <begin position="84"/>
        <end position="95"/>
    </location>
</feature>
<feature type="helix" evidence="1">
    <location>
        <begin position="96"/>
        <end position="101"/>
    </location>
</feature>
<feature type="helix" evidence="1">
    <location>
        <begin position="102"/>
        <end position="104"/>
    </location>
</feature>
<feature type="strand" evidence="1">
    <location>
        <begin position="106"/>
        <end position="108"/>
    </location>
</feature>
<feature type="helix" evidence="1">
    <location>
        <begin position="110"/>
        <end position="117"/>
    </location>
</feature>
<feature type="helix" evidence="1">
    <location>
        <begin position="139"/>
        <end position="153"/>
    </location>
</feature>
<accession>Q70LE6</accession>
<protein>
    <recommendedName>
        <fullName>Uncharacterized protein ORF157</fullName>
    </recommendedName>
</protein>
<name>Y157_AFV1Y</name>
<gene>
    <name type="ORF">ORF157</name>
</gene>
<organism>
    <name type="scientific">Acidianus filamentous virus 1 (isolate United States/Yellowstone)</name>
    <name type="common">AFV-1</name>
    <dbReference type="NCBI Taxonomy" id="654909"/>
    <lineage>
        <taxon>Viruses</taxon>
        <taxon>Adnaviria</taxon>
        <taxon>Zilligvirae</taxon>
        <taxon>Taleaviricota</taxon>
        <taxon>Tokiviricetes</taxon>
        <taxon>Ligamenvirales</taxon>
        <taxon>Ungulaviridae</taxon>
        <taxon>Captovirus</taxon>
        <taxon>Acidianus filamentous virus 1</taxon>
    </lineage>
</organism>